<dbReference type="EC" id="6.3.1.21" evidence="1"/>
<dbReference type="EMBL" id="CP001197">
    <property type="protein sequence ID" value="ACL09695.1"/>
    <property type="molecule type" value="Genomic_DNA"/>
</dbReference>
<dbReference type="SMR" id="B8DJ34"/>
<dbReference type="STRING" id="883.DvMF_2756"/>
<dbReference type="KEGG" id="dvm:DvMF_2756"/>
<dbReference type="eggNOG" id="COG0027">
    <property type="taxonomic scope" value="Bacteria"/>
</dbReference>
<dbReference type="HOGENOM" id="CLU_011534_1_3_7"/>
<dbReference type="OrthoDB" id="9804625at2"/>
<dbReference type="UniPathway" id="UPA00074">
    <property type="reaction ID" value="UER00127"/>
</dbReference>
<dbReference type="GO" id="GO:0005829">
    <property type="term" value="C:cytosol"/>
    <property type="evidence" value="ECO:0007669"/>
    <property type="project" value="TreeGrafter"/>
</dbReference>
<dbReference type="GO" id="GO:0005524">
    <property type="term" value="F:ATP binding"/>
    <property type="evidence" value="ECO:0007669"/>
    <property type="project" value="UniProtKB-UniRule"/>
</dbReference>
<dbReference type="GO" id="GO:0000287">
    <property type="term" value="F:magnesium ion binding"/>
    <property type="evidence" value="ECO:0007669"/>
    <property type="project" value="InterPro"/>
</dbReference>
<dbReference type="GO" id="GO:0043815">
    <property type="term" value="F:phosphoribosylglycinamide formyltransferase 2 activity"/>
    <property type="evidence" value="ECO:0007669"/>
    <property type="project" value="UniProtKB-UniRule"/>
</dbReference>
<dbReference type="GO" id="GO:0004644">
    <property type="term" value="F:phosphoribosylglycinamide formyltransferase activity"/>
    <property type="evidence" value="ECO:0007669"/>
    <property type="project" value="InterPro"/>
</dbReference>
<dbReference type="GO" id="GO:0006189">
    <property type="term" value="P:'de novo' IMP biosynthetic process"/>
    <property type="evidence" value="ECO:0007669"/>
    <property type="project" value="UniProtKB-UniRule"/>
</dbReference>
<dbReference type="FunFam" id="3.30.1490.20:FF:000013">
    <property type="entry name" value="Formate-dependent phosphoribosylglycinamide formyltransferase"/>
    <property type="match status" value="1"/>
</dbReference>
<dbReference type="FunFam" id="3.30.470.20:FF:000027">
    <property type="entry name" value="Formate-dependent phosphoribosylglycinamide formyltransferase"/>
    <property type="match status" value="1"/>
</dbReference>
<dbReference type="FunFam" id="3.40.50.20:FF:000007">
    <property type="entry name" value="Formate-dependent phosphoribosylglycinamide formyltransferase"/>
    <property type="match status" value="1"/>
</dbReference>
<dbReference type="Gene3D" id="3.40.50.20">
    <property type="match status" value="1"/>
</dbReference>
<dbReference type="Gene3D" id="3.30.1490.20">
    <property type="entry name" value="ATP-grasp fold, A domain"/>
    <property type="match status" value="1"/>
</dbReference>
<dbReference type="Gene3D" id="3.30.470.20">
    <property type="entry name" value="ATP-grasp fold, B domain"/>
    <property type="match status" value="1"/>
</dbReference>
<dbReference type="HAMAP" id="MF_01643">
    <property type="entry name" value="PurT"/>
    <property type="match status" value="1"/>
</dbReference>
<dbReference type="InterPro" id="IPR011761">
    <property type="entry name" value="ATP-grasp"/>
</dbReference>
<dbReference type="InterPro" id="IPR003135">
    <property type="entry name" value="ATP-grasp_carboxylate-amine"/>
</dbReference>
<dbReference type="InterPro" id="IPR013815">
    <property type="entry name" value="ATP_grasp_subdomain_1"/>
</dbReference>
<dbReference type="InterPro" id="IPR016185">
    <property type="entry name" value="PreATP-grasp_dom_sf"/>
</dbReference>
<dbReference type="InterPro" id="IPR005862">
    <property type="entry name" value="PurT"/>
</dbReference>
<dbReference type="InterPro" id="IPR054350">
    <property type="entry name" value="PurT/PurK_preATP-grasp"/>
</dbReference>
<dbReference type="InterPro" id="IPR048740">
    <property type="entry name" value="PurT_C"/>
</dbReference>
<dbReference type="InterPro" id="IPR011054">
    <property type="entry name" value="Rudment_hybrid_motif"/>
</dbReference>
<dbReference type="NCBIfam" id="NF006766">
    <property type="entry name" value="PRK09288.1"/>
    <property type="match status" value="1"/>
</dbReference>
<dbReference type="NCBIfam" id="TIGR01142">
    <property type="entry name" value="purT"/>
    <property type="match status" value="1"/>
</dbReference>
<dbReference type="PANTHER" id="PTHR43055">
    <property type="entry name" value="FORMATE-DEPENDENT PHOSPHORIBOSYLGLYCINAMIDE FORMYLTRANSFERASE"/>
    <property type="match status" value="1"/>
</dbReference>
<dbReference type="PANTHER" id="PTHR43055:SF1">
    <property type="entry name" value="FORMATE-DEPENDENT PHOSPHORIBOSYLGLYCINAMIDE FORMYLTRANSFERASE"/>
    <property type="match status" value="1"/>
</dbReference>
<dbReference type="Pfam" id="PF02222">
    <property type="entry name" value="ATP-grasp"/>
    <property type="match status" value="1"/>
</dbReference>
<dbReference type="Pfam" id="PF21244">
    <property type="entry name" value="PurT_C"/>
    <property type="match status" value="1"/>
</dbReference>
<dbReference type="Pfam" id="PF22660">
    <property type="entry name" value="RS_preATP-grasp-like"/>
    <property type="match status" value="1"/>
</dbReference>
<dbReference type="SUPFAM" id="SSF56059">
    <property type="entry name" value="Glutathione synthetase ATP-binding domain-like"/>
    <property type="match status" value="1"/>
</dbReference>
<dbReference type="SUPFAM" id="SSF52440">
    <property type="entry name" value="PreATP-grasp domain"/>
    <property type="match status" value="1"/>
</dbReference>
<dbReference type="SUPFAM" id="SSF51246">
    <property type="entry name" value="Rudiment single hybrid motif"/>
    <property type="match status" value="1"/>
</dbReference>
<dbReference type="PROSITE" id="PS50975">
    <property type="entry name" value="ATP_GRASP"/>
    <property type="match status" value="1"/>
</dbReference>
<comment type="function">
    <text evidence="1">Involved in the de novo purine biosynthesis. Catalyzes the transfer of formate to 5-phospho-ribosyl-glycinamide (GAR), producing 5-phospho-ribosyl-N-formylglycinamide (FGAR). Formate is provided by PurU via hydrolysis of 10-formyl-tetrahydrofolate.</text>
</comment>
<comment type="catalytic activity">
    <reaction evidence="1">
        <text>N(1)-(5-phospho-beta-D-ribosyl)glycinamide + formate + ATP = N(2)-formyl-N(1)-(5-phospho-beta-D-ribosyl)glycinamide + ADP + phosphate + H(+)</text>
        <dbReference type="Rhea" id="RHEA:24829"/>
        <dbReference type="ChEBI" id="CHEBI:15378"/>
        <dbReference type="ChEBI" id="CHEBI:15740"/>
        <dbReference type="ChEBI" id="CHEBI:30616"/>
        <dbReference type="ChEBI" id="CHEBI:43474"/>
        <dbReference type="ChEBI" id="CHEBI:143788"/>
        <dbReference type="ChEBI" id="CHEBI:147286"/>
        <dbReference type="ChEBI" id="CHEBI:456216"/>
        <dbReference type="EC" id="6.3.1.21"/>
    </reaction>
    <physiologicalReaction direction="left-to-right" evidence="1">
        <dbReference type="Rhea" id="RHEA:24830"/>
    </physiologicalReaction>
</comment>
<comment type="pathway">
    <text evidence="1">Purine metabolism; IMP biosynthesis via de novo pathway; N(2)-formyl-N(1)-(5-phospho-D-ribosyl)glycinamide from N(1)-(5-phospho-D-ribosyl)glycinamide (formate route): step 1/1.</text>
</comment>
<comment type="subunit">
    <text evidence="1">Homodimer.</text>
</comment>
<comment type="similarity">
    <text evidence="1">Belongs to the PurK/PurT family.</text>
</comment>
<sequence length="393" mass="42023">MVTIGTPNTPSATRILLLGSGELGREVAIEAMRLGVEVIAVDRYPNAPAMQVAHRSHVVSMLDGAALRRIIEAERPHCIVPEIEAIATETLLELEKEGFRVVPTARAARLTMDREGIRRLAAEELGLPTSPYRFAETEAEYREAVAAVGLPCVVKPVMSSSGKGQSTVRTEADVMKAWEYAQTGGRAGGGKVIVEGFVDFDYEITQLTVRHAGGTTFCDPIGHLQKDGDYRESWQPHPMSQAALAESRRMAEAVTGALGGWGIFGVELFIKGDKVYFSEVSPRPHDTGLVTLISQNLSEFALHARAILGLPVPALRQNGPAASCVVLAEGDSMSPGYHGIEAALAEPDTGLCLFGKPEVHGKRRMGVALALGASIEEARAKARRAAAAVQVEL</sequence>
<feature type="chain" id="PRO_1000186879" description="Formate-dependent phosphoribosylglycinamide formyltransferase">
    <location>
        <begin position="1"/>
        <end position="393"/>
    </location>
</feature>
<feature type="domain" description="ATP-grasp" evidence="1">
    <location>
        <begin position="119"/>
        <end position="308"/>
    </location>
</feature>
<feature type="binding site" evidence="1">
    <location>
        <begin position="22"/>
        <end position="23"/>
    </location>
    <ligand>
        <name>N(1)-(5-phospho-beta-D-ribosyl)glycinamide</name>
        <dbReference type="ChEBI" id="CHEBI:143788"/>
    </ligand>
</feature>
<feature type="binding site" evidence="1">
    <location>
        <position position="82"/>
    </location>
    <ligand>
        <name>N(1)-(5-phospho-beta-D-ribosyl)glycinamide</name>
        <dbReference type="ChEBI" id="CHEBI:143788"/>
    </ligand>
</feature>
<feature type="binding site" evidence="1">
    <location>
        <position position="114"/>
    </location>
    <ligand>
        <name>ATP</name>
        <dbReference type="ChEBI" id="CHEBI:30616"/>
    </ligand>
</feature>
<feature type="binding site" evidence="1">
    <location>
        <position position="155"/>
    </location>
    <ligand>
        <name>ATP</name>
        <dbReference type="ChEBI" id="CHEBI:30616"/>
    </ligand>
</feature>
<feature type="binding site" evidence="1">
    <location>
        <begin position="160"/>
        <end position="165"/>
    </location>
    <ligand>
        <name>ATP</name>
        <dbReference type="ChEBI" id="CHEBI:30616"/>
    </ligand>
</feature>
<feature type="binding site" evidence="1">
    <location>
        <begin position="195"/>
        <end position="198"/>
    </location>
    <ligand>
        <name>ATP</name>
        <dbReference type="ChEBI" id="CHEBI:30616"/>
    </ligand>
</feature>
<feature type="binding site" evidence="1">
    <location>
        <position position="203"/>
    </location>
    <ligand>
        <name>ATP</name>
        <dbReference type="ChEBI" id="CHEBI:30616"/>
    </ligand>
</feature>
<feature type="binding site" evidence="1">
    <location>
        <position position="267"/>
    </location>
    <ligand>
        <name>Mg(2+)</name>
        <dbReference type="ChEBI" id="CHEBI:18420"/>
    </ligand>
</feature>
<feature type="binding site" evidence="1">
    <location>
        <position position="279"/>
    </location>
    <ligand>
        <name>Mg(2+)</name>
        <dbReference type="ChEBI" id="CHEBI:18420"/>
    </ligand>
</feature>
<feature type="binding site" evidence="1">
    <location>
        <position position="286"/>
    </location>
    <ligand>
        <name>N(1)-(5-phospho-beta-D-ribosyl)glycinamide</name>
        <dbReference type="ChEBI" id="CHEBI:143788"/>
    </ligand>
</feature>
<feature type="binding site" evidence="1">
    <location>
        <position position="356"/>
    </location>
    <ligand>
        <name>N(1)-(5-phospho-beta-D-ribosyl)glycinamide</name>
        <dbReference type="ChEBI" id="CHEBI:143788"/>
    </ligand>
</feature>
<feature type="binding site" evidence="1">
    <location>
        <begin position="363"/>
        <end position="364"/>
    </location>
    <ligand>
        <name>N(1)-(5-phospho-beta-D-ribosyl)glycinamide</name>
        <dbReference type="ChEBI" id="CHEBI:143788"/>
    </ligand>
</feature>
<reference key="1">
    <citation type="submission" date="2008-10" db="EMBL/GenBank/DDBJ databases">
        <title>Complete sequence of Desulfovibrio vulgaris str. 'Miyazaki F'.</title>
        <authorList>
            <person name="Lucas S."/>
            <person name="Copeland A."/>
            <person name="Lapidus A."/>
            <person name="Glavina del Rio T."/>
            <person name="Dalin E."/>
            <person name="Tice H."/>
            <person name="Bruce D."/>
            <person name="Goodwin L."/>
            <person name="Pitluck S."/>
            <person name="Sims D."/>
            <person name="Brettin T."/>
            <person name="Detter J.C."/>
            <person name="Han C."/>
            <person name="Larimer F."/>
            <person name="Land M."/>
            <person name="Hauser L."/>
            <person name="Kyrpides N."/>
            <person name="Mikhailova N."/>
            <person name="Hazen T.C."/>
            <person name="Richardson P."/>
        </authorList>
    </citation>
    <scope>NUCLEOTIDE SEQUENCE [LARGE SCALE GENOMIC DNA]</scope>
    <source>
        <strain>DSM 19637 / Miyazaki F</strain>
    </source>
</reference>
<gene>
    <name evidence="1" type="primary">purT</name>
    <name type="ordered locus">DvMF_2756</name>
</gene>
<protein>
    <recommendedName>
        <fullName evidence="1">Formate-dependent phosphoribosylglycinamide formyltransferase</fullName>
        <ecNumber evidence="1">6.3.1.21</ecNumber>
    </recommendedName>
    <alternativeName>
        <fullName evidence="1">5'-phosphoribosylglycinamide transformylase 2</fullName>
    </alternativeName>
    <alternativeName>
        <fullName evidence="1">Formate-dependent GAR transformylase</fullName>
    </alternativeName>
    <alternativeName>
        <fullName evidence="1">GAR transformylase 2</fullName>
        <shortName evidence="1">GART 2</shortName>
    </alternativeName>
    <alternativeName>
        <fullName evidence="1">Non-folate glycinamide ribonucleotide transformylase</fullName>
    </alternativeName>
    <alternativeName>
        <fullName evidence="1">Phosphoribosylglycinamide formyltransferase 2</fullName>
    </alternativeName>
</protein>
<name>PURT_NITV9</name>
<keyword id="KW-0067">ATP-binding</keyword>
<keyword id="KW-0436">Ligase</keyword>
<keyword id="KW-0460">Magnesium</keyword>
<keyword id="KW-0479">Metal-binding</keyword>
<keyword id="KW-0547">Nucleotide-binding</keyword>
<keyword id="KW-0658">Purine biosynthesis</keyword>
<proteinExistence type="inferred from homology"/>
<evidence type="ECO:0000255" key="1">
    <source>
        <dbReference type="HAMAP-Rule" id="MF_01643"/>
    </source>
</evidence>
<organism>
    <name type="scientific">Nitratidesulfovibrio vulgaris (strain DSM 19637 / Miyazaki F)</name>
    <name type="common">Desulfovibrio vulgaris</name>
    <dbReference type="NCBI Taxonomy" id="883"/>
    <lineage>
        <taxon>Bacteria</taxon>
        <taxon>Pseudomonadati</taxon>
        <taxon>Thermodesulfobacteriota</taxon>
        <taxon>Desulfovibrionia</taxon>
        <taxon>Desulfovibrionales</taxon>
        <taxon>Desulfovibrionaceae</taxon>
        <taxon>Nitratidesulfovibrio</taxon>
    </lineage>
</organism>
<accession>B8DJ34</accession>